<accession>P61935</accession>
<accession>Q8TID0</accession>
<gene>
    <name type="ordered locus">MA_4223</name>
</gene>
<feature type="chain" id="PRO_0000220401" description="UPF0228 protein MA_4223">
    <location>
        <begin position="1"/>
        <end position="178"/>
    </location>
</feature>
<proteinExistence type="inferred from homology"/>
<comment type="similarity">
    <text evidence="1">Belongs to the UPF0228 family.</text>
</comment>
<reference key="1">
    <citation type="journal article" date="2002" name="Genome Res.">
        <title>The genome of Methanosarcina acetivorans reveals extensive metabolic and physiological diversity.</title>
        <authorList>
            <person name="Galagan J.E."/>
            <person name="Nusbaum C."/>
            <person name="Roy A."/>
            <person name="Endrizzi M.G."/>
            <person name="Macdonald P."/>
            <person name="FitzHugh W."/>
            <person name="Calvo S."/>
            <person name="Engels R."/>
            <person name="Smirnov S."/>
            <person name="Atnoor D."/>
            <person name="Brown A."/>
            <person name="Allen N."/>
            <person name="Naylor J."/>
            <person name="Stange-Thomann N."/>
            <person name="DeArellano K."/>
            <person name="Johnson R."/>
            <person name="Linton L."/>
            <person name="McEwan P."/>
            <person name="McKernan K."/>
            <person name="Talamas J."/>
            <person name="Tirrell A."/>
            <person name="Ye W."/>
            <person name="Zimmer A."/>
            <person name="Barber R.D."/>
            <person name="Cann I."/>
            <person name="Graham D.E."/>
            <person name="Grahame D.A."/>
            <person name="Guss A.M."/>
            <person name="Hedderich R."/>
            <person name="Ingram-Smith C."/>
            <person name="Kuettner H.C."/>
            <person name="Krzycki J.A."/>
            <person name="Leigh J.A."/>
            <person name="Li W."/>
            <person name="Liu J."/>
            <person name="Mukhopadhyay B."/>
            <person name="Reeve J.N."/>
            <person name="Smith K."/>
            <person name="Springer T.A."/>
            <person name="Umayam L.A."/>
            <person name="White O."/>
            <person name="White R.H."/>
            <person name="de Macario E.C."/>
            <person name="Ferry J.G."/>
            <person name="Jarrell K.F."/>
            <person name="Jing H."/>
            <person name="Macario A.J.L."/>
            <person name="Paulsen I.T."/>
            <person name="Pritchett M."/>
            <person name="Sowers K.R."/>
            <person name="Swanson R.V."/>
            <person name="Zinder S.H."/>
            <person name="Lander E."/>
            <person name="Metcalf W.W."/>
            <person name="Birren B."/>
        </authorList>
    </citation>
    <scope>NUCLEOTIDE SEQUENCE [LARGE SCALE GENOMIC DNA]</scope>
    <source>
        <strain>ATCC 35395 / DSM 2834 / JCM 12185 / C2A</strain>
    </source>
</reference>
<keyword id="KW-1185">Reference proteome</keyword>
<sequence>MNKISKVVVVFIALLTFLALMMQSQEVKTPGLLIQFENETSEAEVKAILENYDIPVNYTIDYNSNIGRGMYYIEVDEDKIYELRKDENWTSVVEIKKGNYNIIMLSEEFVPDENVLAMLEKNNLQLKKAVVCYIQFGDGSAPWVVGENCILERDAIRIKNELETNEKVLIVGLDDIVG</sequence>
<organism>
    <name type="scientific">Methanosarcina acetivorans (strain ATCC 35395 / DSM 2834 / JCM 12185 / C2A)</name>
    <dbReference type="NCBI Taxonomy" id="188937"/>
    <lineage>
        <taxon>Archaea</taxon>
        <taxon>Methanobacteriati</taxon>
        <taxon>Methanobacteriota</taxon>
        <taxon>Stenosarchaea group</taxon>
        <taxon>Methanomicrobia</taxon>
        <taxon>Methanosarcinales</taxon>
        <taxon>Methanosarcinaceae</taxon>
        <taxon>Methanosarcina</taxon>
    </lineage>
</organism>
<protein>
    <recommendedName>
        <fullName>UPF0228 protein MA_4223</fullName>
    </recommendedName>
</protein>
<dbReference type="EMBL" id="AE010299">
    <property type="protein sequence ID" value="AAM07568.1"/>
    <property type="molecule type" value="Genomic_DNA"/>
</dbReference>
<dbReference type="RefSeq" id="WP_011024107.1">
    <property type="nucleotide sequence ID" value="NC_003552.1"/>
</dbReference>
<dbReference type="EnsemblBacteria" id="AAM07568">
    <property type="protein sequence ID" value="AAM07568"/>
    <property type="gene ID" value="MA_4223"/>
</dbReference>
<dbReference type="KEGG" id="mac:MA_4223"/>
<dbReference type="HOGENOM" id="CLU_106567_0_0_2"/>
<dbReference type="InParanoid" id="P61935"/>
<dbReference type="OrthoDB" id="135514at2157"/>
<dbReference type="PhylomeDB" id="P61935"/>
<dbReference type="Proteomes" id="UP000002487">
    <property type="component" value="Chromosome"/>
</dbReference>
<dbReference type="InterPro" id="IPR008887">
    <property type="entry name" value="UPF0228"/>
</dbReference>
<dbReference type="Pfam" id="PF05727">
    <property type="entry name" value="UPF0228"/>
    <property type="match status" value="1"/>
</dbReference>
<evidence type="ECO:0000305" key="1"/>
<name>Y4223_METAC</name>